<reference key="1">
    <citation type="submission" date="2004-05" db="EMBL/GenBank/DDBJ databases">
        <authorList>
            <consortium name="NIH - Xenopus Gene Collection (XGC) project"/>
        </authorList>
    </citation>
    <scope>NUCLEOTIDE SEQUENCE [LARGE SCALE MRNA]</scope>
    <source>
        <tissue>Ovary</tissue>
    </source>
</reference>
<proteinExistence type="evidence at transcript level"/>
<name>UN50A_XENLA</name>
<accession>Q6DKM1</accession>
<protein>
    <recommendedName>
        <fullName>Protein unc-50 homolog A</fullName>
    </recommendedName>
</protein>
<comment type="function">
    <text evidence="1">Involved in the cell surface expression of neuronal nicotinic receptors (By similarity). Binds RNA (By similarity).</text>
</comment>
<comment type="subcellular location">
    <subcellularLocation>
        <location evidence="1">Nucleus inner membrane</location>
        <topology evidence="1">Multi-pass membrane protein</topology>
    </subcellularLocation>
    <subcellularLocation>
        <location evidence="2">Golgi apparatus membrane</location>
        <topology evidence="2">Multi-pass membrane protein</topology>
    </subcellularLocation>
</comment>
<comment type="similarity">
    <text evidence="4">Belongs to the unc-50 family.</text>
</comment>
<evidence type="ECO:0000250" key="1">
    <source>
        <dbReference type="UniProtKB" id="O55227"/>
    </source>
</evidence>
<evidence type="ECO:0000250" key="2">
    <source>
        <dbReference type="UniProtKB" id="Q53HI1"/>
    </source>
</evidence>
<evidence type="ECO:0000255" key="3"/>
<evidence type="ECO:0000305" key="4"/>
<gene>
    <name type="primary">unc50-a</name>
</gene>
<organism>
    <name type="scientific">Xenopus laevis</name>
    <name type="common">African clawed frog</name>
    <dbReference type="NCBI Taxonomy" id="8355"/>
    <lineage>
        <taxon>Eukaryota</taxon>
        <taxon>Metazoa</taxon>
        <taxon>Chordata</taxon>
        <taxon>Craniata</taxon>
        <taxon>Vertebrata</taxon>
        <taxon>Euteleostomi</taxon>
        <taxon>Amphibia</taxon>
        <taxon>Batrachia</taxon>
        <taxon>Anura</taxon>
        <taxon>Pipoidea</taxon>
        <taxon>Pipidae</taxon>
        <taxon>Xenopodinae</taxon>
        <taxon>Xenopus</taxon>
        <taxon>Xenopus</taxon>
    </lineage>
</organism>
<dbReference type="EMBL" id="BC071145">
    <property type="protein sequence ID" value="AAH71145.1"/>
    <property type="molecule type" value="mRNA"/>
</dbReference>
<dbReference type="RefSeq" id="NP_001085372.1">
    <property type="nucleotide sequence ID" value="NM_001091903.1"/>
</dbReference>
<dbReference type="DNASU" id="443798"/>
<dbReference type="GeneID" id="443798"/>
<dbReference type="KEGG" id="xla:443798"/>
<dbReference type="AGR" id="Xenbase:XB-GENE-1005838"/>
<dbReference type="CTD" id="443798"/>
<dbReference type="Xenbase" id="XB-GENE-1005838">
    <property type="gene designation" value="unc50.L"/>
</dbReference>
<dbReference type="OrthoDB" id="10027013at2759"/>
<dbReference type="Proteomes" id="UP000186698">
    <property type="component" value="Chromosome 2L"/>
</dbReference>
<dbReference type="Bgee" id="443798">
    <property type="expression patterns" value="Expressed in liver and 19 other cell types or tissues"/>
</dbReference>
<dbReference type="GO" id="GO:0000139">
    <property type="term" value="C:Golgi membrane"/>
    <property type="evidence" value="ECO:0000318"/>
    <property type="project" value="GO_Central"/>
</dbReference>
<dbReference type="GO" id="GO:0005637">
    <property type="term" value="C:nuclear inner membrane"/>
    <property type="evidence" value="ECO:0000250"/>
    <property type="project" value="UniProtKB"/>
</dbReference>
<dbReference type="GO" id="GO:0003723">
    <property type="term" value="F:RNA binding"/>
    <property type="evidence" value="ECO:0000250"/>
    <property type="project" value="UniProtKB"/>
</dbReference>
<dbReference type="GO" id="GO:0034394">
    <property type="term" value="P:protein localization to cell surface"/>
    <property type="evidence" value="ECO:0000250"/>
    <property type="project" value="UniProtKB"/>
</dbReference>
<dbReference type="InterPro" id="IPR007881">
    <property type="entry name" value="UNC-50"/>
</dbReference>
<dbReference type="PANTHER" id="PTHR12841">
    <property type="entry name" value="PROTEIN UNC-50 HOMOLOG"/>
    <property type="match status" value="1"/>
</dbReference>
<dbReference type="PANTHER" id="PTHR12841:SF6">
    <property type="entry name" value="PROTEIN UNC-50 HOMOLOG"/>
    <property type="match status" value="1"/>
</dbReference>
<dbReference type="Pfam" id="PF05216">
    <property type="entry name" value="UNC-50"/>
    <property type="match status" value="1"/>
</dbReference>
<keyword id="KW-0333">Golgi apparatus</keyword>
<keyword id="KW-0472">Membrane</keyword>
<keyword id="KW-0539">Nucleus</keyword>
<keyword id="KW-1185">Reference proteome</keyword>
<keyword id="KW-0694">RNA-binding</keyword>
<keyword id="KW-0812">Transmembrane</keyword>
<keyword id="KW-1133">Transmembrane helix</keyword>
<feature type="chain" id="PRO_0000308965" description="Protein unc-50 homolog A">
    <location>
        <begin position="1"/>
        <end position="259"/>
    </location>
</feature>
<feature type="topological domain" description="Cytoplasmic" evidence="3">
    <location>
        <begin position="1"/>
        <end position="82"/>
    </location>
</feature>
<feature type="transmembrane region" description="Helical" evidence="3">
    <location>
        <begin position="83"/>
        <end position="103"/>
    </location>
</feature>
<feature type="topological domain" description="Lumenal" evidence="3">
    <location>
        <begin position="104"/>
        <end position="112"/>
    </location>
</feature>
<feature type="transmembrane region" description="Helical" evidence="3">
    <location>
        <begin position="113"/>
        <end position="133"/>
    </location>
</feature>
<feature type="topological domain" description="Cytoplasmic" evidence="3">
    <location>
        <begin position="134"/>
        <end position="158"/>
    </location>
</feature>
<feature type="transmembrane region" description="Helical" evidence="3">
    <location>
        <begin position="159"/>
        <end position="179"/>
    </location>
</feature>
<feature type="topological domain" description="Lumenal" evidence="3">
    <location>
        <begin position="180"/>
        <end position="181"/>
    </location>
</feature>
<feature type="transmembrane region" description="Helical" evidence="3">
    <location>
        <begin position="182"/>
        <end position="202"/>
    </location>
</feature>
<feature type="topological domain" description="Cytoplasmic" evidence="3">
    <location>
        <begin position="203"/>
        <end position="222"/>
    </location>
</feature>
<feature type="transmembrane region" description="Helical" evidence="3">
    <location>
        <begin position="223"/>
        <end position="243"/>
    </location>
</feature>
<feature type="topological domain" description="Lumenal" evidence="3">
    <location>
        <begin position="244"/>
        <end position="259"/>
    </location>
</feature>
<sequence length="259" mass="30602">MLPTTSVSPRSPDNGILSPREAARHTAGAKRYKYLRRLFHFKQMDFEFALWQMLYLFTSPQKVYRNFHYRKQTKDQWARDDPAFLVLLSIWLCVSTVGFGFVLDMSFFETFKLLLWVVFIDCVGVGLLIATLMWFVSNKYMVKRQGKDYDVEWGYTFDVHLNAFYPLLVILHFIQLFFINHVILSGWFIGYFVGNTIWLIAIGYYIYITFLGYSALPFLKNTVILLYPFAALALLYVLSLALGWNFTEKLCLFYKYRVR</sequence>